<sequence length="137" mass="15870">MSKKVENLMLGSWLTALTAMLGSLYFSEIRMYEPCTLCWYQRIIMYPLVLILFIGYLKRDVNVALYSLWFSLIGMFTSLYHYSIQKLPFLTDAAPACGRVPCTGQYINWFGFVTIPFLAFTAFVIIFICSLLIIREK</sequence>
<accession>Q9KBI6</accession>
<evidence type="ECO:0000255" key="1">
    <source>
        <dbReference type="HAMAP-Rule" id="MF_00287"/>
    </source>
</evidence>
<gene>
    <name evidence="1" type="primary">bdbC</name>
    <name type="ordered locus">BH1941</name>
</gene>
<reference key="1">
    <citation type="journal article" date="2000" name="Nucleic Acids Res.">
        <title>Complete genome sequence of the alkaliphilic bacterium Bacillus halodurans and genomic sequence comparison with Bacillus subtilis.</title>
        <authorList>
            <person name="Takami H."/>
            <person name="Nakasone K."/>
            <person name="Takaki Y."/>
            <person name="Maeno G."/>
            <person name="Sasaki R."/>
            <person name="Masui N."/>
            <person name="Fuji F."/>
            <person name="Hirama C."/>
            <person name="Nakamura Y."/>
            <person name="Ogasawara N."/>
            <person name="Kuhara S."/>
            <person name="Horikoshi K."/>
        </authorList>
    </citation>
    <scope>NUCLEOTIDE SEQUENCE [LARGE SCALE GENOMIC DNA]</scope>
    <source>
        <strain>ATCC BAA-125 / DSM 18197 / FERM 7344 / JCM 9153 / C-125</strain>
    </source>
</reference>
<proteinExistence type="inferred from homology"/>
<organism>
    <name type="scientific">Halalkalibacterium halodurans (strain ATCC BAA-125 / DSM 18197 / FERM 7344 / JCM 9153 / C-125)</name>
    <name type="common">Bacillus halodurans</name>
    <dbReference type="NCBI Taxonomy" id="272558"/>
    <lineage>
        <taxon>Bacteria</taxon>
        <taxon>Bacillati</taxon>
        <taxon>Bacillota</taxon>
        <taxon>Bacilli</taxon>
        <taxon>Bacillales</taxon>
        <taxon>Bacillaceae</taxon>
        <taxon>Halalkalibacterium (ex Joshi et al. 2022)</taxon>
    </lineage>
</organism>
<comment type="function">
    <text evidence="1">Required for disulfide bond formation in some proteins.</text>
</comment>
<comment type="subcellular location">
    <subcellularLocation>
        <location evidence="1">Cell membrane</location>
        <topology evidence="1">Multi-pass membrane protein</topology>
    </subcellularLocation>
</comment>
<comment type="similarity">
    <text evidence="1">Belongs to the DsbB family. BdbC subfamily.</text>
</comment>
<name>BDBC_HALH5</name>
<dbReference type="EMBL" id="BA000004">
    <property type="protein sequence ID" value="BAB05660.1"/>
    <property type="molecule type" value="Genomic_DNA"/>
</dbReference>
<dbReference type="PIR" id="E83892">
    <property type="entry name" value="E83892"/>
</dbReference>
<dbReference type="RefSeq" id="WP_010898100.1">
    <property type="nucleotide sequence ID" value="NC_002570.2"/>
</dbReference>
<dbReference type="STRING" id="272558.gene:10727839"/>
<dbReference type="GeneID" id="87597538"/>
<dbReference type="KEGG" id="bha:BH1941"/>
<dbReference type="eggNOG" id="COG1495">
    <property type="taxonomic scope" value="Bacteria"/>
</dbReference>
<dbReference type="HOGENOM" id="CLU_128688_0_0_9"/>
<dbReference type="OrthoDB" id="158402at2"/>
<dbReference type="Proteomes" id="UP000001258">
    <property type="component" value="Chromosome"/>
</dbReference>
<dbReference type="GO" id="GO:0005886">
    <property type="term" value="C:plasma membrane"/>
    <property type="evidence" value="ECO:0007669"/>
    <property type="project" value="UniProtKB-SubCell"/>
</dbReference>
<dbReference type="GO" id="GO:0015035">
    <property type="term" value="F:protein-disulfide reductase activity"/>
    <property type="evidence" value="ECO:0007669"/>
    <property type="project" value="UniProtKB-UniRule"/>
</dbReference>
<dbReference type="GO" id="GO:0006457">
    <property type="term" value="P:protein folding"/>
    <property type="evidence" value="ECO:0007669"/>
    <property type="project" value="InterPro"/>
</dbReference>
<dbReference type="Gene3D" id="1.20.1550.10">
    <property type="entry name" value="DsbB-like"/>
    <property type="match status" value="1"/>
</dbReference>
<dbReference type="HAMAP" id="MF_00287">
    <property type="entry name" value="BdbC"/>
    <property type="match status" value="1"/>
</dbReference>
<dbReference type="InterPro" id="IPR003752">
    <property type="entry name" value="DiS_bond_form_DsbB/BdbC"/>
</dbReference>
<dbReference type="InterPro" id="IPR012187">
    <property type="entry name" value="Disulphide_bond_form_BdbC"/>
</dbReference>
<dbReference type="InterPro" id="IPR023380">
    <property type="entry name" value="DsbB-like_sf"/>
</dbReference>
<dbReference type="NCBIfam" id="NF002849">
    <property type="entry name" value="PRK03113.1"/>
    <property type="match status" value="1"/>
</dbReference>
<dbReference type="PANTHER" id="PTHR43469">
    <property type="entry name" value="DISULFIDE FORMATION PROTEIN-RELATED"/>
    <property type="match status" value="1"/>
</dbReference>
<dbReference type="PANTHER" id="PTHR43469:SF1">
    <property type="entry name" value="SPBETA PROPHAGE-DERIVED DISULFIDE BOND FORMATION PROTEIN B"/>
    <property type="match status" value="1"/>
</dbReference>
<dbReference type="Pfam" id="PF02600">
    <property type="entry name" value="DsbB"/>
    <property type="match status" value="1"/>
</dbReference>
<dbReference type="PIRSF" id="PIRSF036659">
    <property type="entry name" value="BdbC"/>
    <property type="match status" value="1"/>
</dbReference>
<dbReference type="SUPFAM" id="SSF158442">
    <property type="entry name" value="DsbB-like"/>
    <property type="match status" value="1"/>
</dbReference>
<keyword id="KW-1003">Cell membrane</keyword>
<keyword id="KW-0143">Chaperone</keyword>
<keyword id="KW-1015">Disulfide bond</keyword>
<keyword id="KW-0249">Electron transport</keyword>
<keyword id="KW-0472">Membrane</keyword>
<keyword id="KW-0560">Oxidoreductase</keyword>
<keyword id="KW-0676">Redox-active center</keyword>
<keyword id="KW-1185">Reference proteome</keyword>
<keyword id="KW-0812">Transmembrane</keyword>
<keyword id="KW-1133">Transmembrane helix</keyword>
<keyword id="KW-0813">Transport</keyword>
<protein>
    <recommendedName>
        <fullName evidence="1">Probable disulfide formation protein C</fullName>
    </recommendedName>
    <alternativeName>
        <fullName evidence="1">Disulfide oxidoreductase C</fullName>
    </alternativeName>
    <alternativeName>
        <fullName evidence="1">Thiol-disulfide oxidoreductase C</fullName>
    </alternativeName>
</protein>
<feature type="chain" id="PRO_0000059375" description="Probable disulfide formation protein C">
    <location>
        <begin position="1"/>
        <end position="137"/>
    </location>
</feature>
<feature type="transmembrane region" description="Helical" evidence="1">
    <location>
        <begin position="6"/>
        <end position="25"/>
    </location>
</feature>
<feature type="transmembrane region" description="Helical" evidence="1">
    <location>
        <begin position="40"/>
        <end position="59"/>
    </location>
</feature>
<feature type="transmembrane region" description="Helical" evidence="1">
    <location>
        <begin position="66"/>
        <end position="83"/>
    </location>
</feature>
<feature type="transmembrane region" description="Helical" evidence="1">
    <location>
        <begin position="111"/>
        <end position="133"/>
    </location>
</feature>
<feature type="disulfide bond" description="Redox-active" evidence="1">
    <location>
        <begin position="35"/>
        <end position="38"/>
    </location>
</feature>
<feature type="disulfide bond" description="Redox-active" evidence="1">
    <location>
        <begin position="97"/>
        <end position="102"/>
    </location>
</feature>